<accession>Q63RV5</accession>
<organism>
    <name type="scientific">Burkholderia pseudomallei (strain K96243)</name>
    <dbReference type="NCBI Taxonomy" id="272560"/>
    <lineage>
        <taxon>Bacteria</taxon>
        <taxon>Pseudomonadati</taxon>
        <taxon>Pseudomonadota</taxon>
        <taxon>Betaproteobacteria</taxon>
        <taxon>Burkholderiales</taxon>
        <taxon>Burkholderiaceae</taxon>
        <taxon>Burkholderia</taxon>
        <taxon>pseudomallei group</taxon>
    </lineage>
</organism>
<evidence type="ECO:0000255" key="1">
    <source>
        <dbReference type="HAMAP-Rule" id="MF_00564"/>
    </source>
</evidence>
<sequence>MTNSSLRPSGRRADQLRDVRITRHYTKHAEGAVLVEFGDTKVICTASVAERVPEFLRERGQGWLTAEYGMLPRATHTRSDREAARGKQTGRTQEIQRLIGRALRAVFDLNALGPRTLHLDCDVIQADGGTRTASITGAFVAAHDAVTKLVAAGRIARSPITDYVAAISVGVFGGTPVLDLDYDEDSACDTDMNVVMTGAGGFVEVQGTAEGAPFSRTEMNALLDLAQAGIGELVRLQRAALEA</sequence>
<feature type="chain" id="PRO_0000139879" description="Ribonuclease PH">
    <location>
        <begin position="1"/>
        <end position="243"/>
    </location>
</feature>
<feature type="binding site" evidence="1">
    <location>
        <position position="91"/>
    </location>
    <ligand>
        <name>phosphate</name>
        <dbReference type="ChEBI" id="CHEBI:43474"/>
        <note>substrate</note>
    </ligand>
</feature>
<feature type="binding site" evidence="1">
    <location>
        <begin position="129"/>
        <end position="131"/>
    </location>
    <ligand>
        <name>phosphate</name>
        <dbReference type="ChEBI" id="CHEBI:43474"/>
        <note>substrate</note>
    </ligand>
</feature>
<comment type="function">
    <text evidence="1">Phosphorolytic 3'-5' exoribonuclease that plays an important role in tRNA 3'-end maturation. Removes nucleotide residues following the 3'-CCA terminus of tRNAs; can also add nucleotides to the ends of RNA molecules by using nucleoside diphosphates as substrates, but this may not be physiologically important. Probably plays a role in initiation of 16S rRNA degradation (leading to ribosome degradation) during starvation.</text>
</comment>
<comment type="catalytic activity">
    <reaction evidence="1">
        <text>tRNA(n+1) + phosphate = tRNA(n) + a ribonucleoside 5'-diphosphate</text>
        <dbReference type="Rhea" id="RHEA:10628"/>
        <dbReference type="Rhea" id="RHEA-COMP:17343"/>
        <dbReference type="Rhea" id="RHEA-COMP:17344"/>
        <dbReference type="ChEBI" id="CHEBI:43474"/>
        <dbReference type="ChEBI" id="CHEBI:57930"/>
        <dbReference type="ChEBI" id="CHEBI:173114"/>
        <dbReference type="EC" id="2.7.7.56"/>
    </reaction>
</comment>
<comment type="subunit">
    <text evidence="1">Homohexameric ring arranged as a trimer of dimers.</text>
</comment>
<comment type="similarity">
    <text evidence="1">Belongs to the RNase PH family.</text>
</comment>
<proteinExistence type="inferred from homology"/>
<keyword id="KW-0548">Nucleotidyltransferase</keyword>
<keyword id="KW-1185">Reference proteome</keyword>
<keyword id="KW-0694">RNA-binding</keyword>
<keyword id="KW-0698">rRNA processing</keyword>
<keyword id="KW-0808">Transferase</keyword>
<keyword id="KW-0819">tRNA processing</keyword>
<keyword id="KW-0820">tRNA-binding</keyword>
<protein>
    <recommendedName>
        <fullName evidence="1">Ribonuclease PH</fullName>
        <shortName evidence="1">RNase PH</shortName>
        <ecNumber evidence="1">2.7.7.56</ecNumber>
    </recommendedName>
    <alternativeName>
        <fullName evidence="1">tRNA nucleotidyltransferase</fullName>
    </alternativeName>
</protein>
<gene>
    <name evidence="1" type="primary">rph</name>
    <name type="ordered locus">BPSL2565</name>
</gene>
<reference key="1">
    <citation type="journal article" date="2004" name="Proc. Natl. Acad. Sci. U.S.A.">
        <title>Genomic plasticity of the causative agent of melioidosis, Burkholderia pseudomallei.</title>
        <authorList>
            <person name="Holden M.T.G."/>
            <person name="Titball R.W."/>
            <person name="Peacock S.J."/>
            <person name="Cerdeno-Tarraga A.-M."/>
            <person name="Atkins T."/>
            <person name="Crossman L.C."/>
            <person name="Pitt T."/>
            <person name="Churcher C."/>
            <person name="Mungall K.L."/>
            <person name="Bentley S.D."/>
            <person name="Sebaihia M."/>
            <person name="Thomson N.R."/>
            <person name="Bason N."/>
            <person name="Beacham I.R."/>
            <person name="Brooks K."/>
            <person name="Brown K.A."/>
            <person name="Brown N.F."/>
            <person name="Challis G.L."/>
            <person name="Cherevach I."/>
            <person name="Chillingworth T."/>
            <person name="Cronin A."/>
            <person name="Crossett B."/>
            <person name="Davis P."/>
            <person name="DeShazer D."/>
            <person name="Feltwell T."/>
            <person name="Fraser A."/>
            <person name="Hance Z."/>
            <person name="Hauser H."/>
            <person name="Holroyd S."/>
            <person name="Jagels K."/>
            <person name="Keith K.E."/>
            <person name="Maddison M."/>
            <person name="Moule S."/>
            <person name="Price C."/>
            <person name="Quail M.A."/>
            <person name="Rabbinowitsch E."/>
            <person name="Rutherford K."/>
            <person name="Sanders M."/>
            <person name="Simmonds M."/>
            <person name="Songsivilai S."/>
            <person name="Stevens K."/>
            <person name="Tumapa S."/>
            <person name="Vesaratchavest M."/>
            <person name="Whitehead S."/>
            <person name="Yeats C."/>
            <person name="Barrell B.G."/>
            <person name="Oyston P.C.F."/>
            <person name="Parkhill J."/>
        </authorList>
    </citation>
    <scope>NUCLEOTIDE SEQUENCE [LARGE SCALE GENOMIC DNA]</scope>
    <source>
        <strain>K96243</strain>
    </source>
</reference>
<dbReference type="EC" id="2.7.7.56" evidence="1"/>
<dbReference type="EMBL" id="BX571965">
    <property type="protein sequence ID" value="CAH36573.1"/>
    <property type="molecule type" value="Genomic_DNA"/>
</dbReference>
<dbReference type="RefSeq" id="WP_004186400.1">
    <property type="nucleotide sequence ID" value="NZ_CP009538.1"/>
</dbReference>
<dbReference type="RefSeq" id="YP_109162.1">
    <property type="nucleotide sequence ID" value="NC_006350.1"/>
</dbReference>
<dbReference type="SMR" id="Q63RV5"/>
<dbReference type="STRING" id="272560.BPSL2565"/>
<dbReference type="GeneID" id="93061158"/>
<dbReference type="KEGG" id="bps:BPSL2565"/>
<dbReference type="PATRIC" id="fig|272560.51.peg.2799"/>
<dbReference type="eggNOG" id="COG0689">
    <property type="taxonomic scope" value="Bacteria"/>
</dbReference>
<dbReference type="Proteomes" id="UP000000605">
    <property type="component" value="Chromosome 1"/>
</dbReference>
<dbReference type="GO" id="GO:0000175">
    <property type="term" value="F:3'-5'-RNA exonuclease activity"/>
    <property type="evidence" value="ECO:0007669"/>
    <property type="project" value="UniProtKB-UniRule"/>
</dbReference>
<dbReference type="GO" id="GO:0000049">
    <property type="term" value="F:tRNA binding"/>
    <property type="evidence" value="ECO:0007669"/>
    <property type="project" value="UniProtKB-UniRule"/>
</dbReference>
<dbReference type="GO" id="GO:0009022">
    <property type="term" value="F:tRNA nucleotidyltransferase activity"/>
    <property type="evidence" value="ECO:0007669"/>
    <property type="project" value="UniProtKB-UniRule"/>
</dbReference>
<dbReference type="GO" id="GO:0016075">
    <property type="term" value="P:rRNA catabolic process"/>
    <property type="evidence" value="ECO:0007669"/>
    <property type="project" value="UniProtKB-UniRule"/>
</dbReference>
<dbReference type="GO" id="GO:0006364">
    <property type="term" value="P:rRNA processing"/>
    <property type="evidence" value="ECO:0007669"/>
    <property type="project" value="UniProtKB-KW"/>
</dbReference>
<dbReference type="GO" id="GO:0008033">
    <property type="term" value="P:tRNA processing"/>
    <property type="evidence" value="ECO:0007669"/>
    <property type="project" value="UniProtKB-UniRule"/>
</dbReference>
<dbReference type="CDD" id="cd11362">
    <property type="entry name" value="RNase_PH_bact"/>
    <property type="match status" value="1"/>
</dbReference>
<dbReference type="FunFam" id="3.30.230.70:FF:000003">
    <property type="entry name" value="Ribonuclease PH"/>
    <property type="match status" value="1"/>
</dbReference>
<dbReference type="Gene3D" id="3.30.230.70">
    <property type="entry name" value="GHMP Kinase, N-terminal domain"/>
    <property type="match status" value="1"/>
</dbReference>
<dbReference type="HAMAP" id="MF_00564">
    <property type="entry name" value="RNase_PH"/>
    <property type="match status" value="1"/>
</dbReference>
<dbReference type="InterPro" id="IPR001247">
    <property type="entry name" value="ExoRNase_PH_dom1"/>
</dbReference>
<dbReference type="InterPro" id="IPR015847">
    <property type="entry name" value="ExoRNase_PH_dom2"/>
</dbReference>
<dbReference type="InterPro" id="IPR036345">
    <property type="entry name" value="ExoRNase_PH_dom2_sf"/>
</dbReference>
<dbReference type="InterPro" id="IPR027408">
    <property type="entry name" value="PNPase/RNase_PH_dom_sf"/>
</dbReference>
<dbReference type="InterPro" id="IPR020568">
    <property type="entry name" value="Ribosomal_Su5_D2-typ_SF"/>
</dbReference>
<dbReference type="InterPro" id="IPR050080">
    <property type="entry name" value="RNase_PH"/>
</dbReference>
<dbReference type="InterPro" id="IPR002381">
    <property type="entry name" value="RNase_PH_bac-type"/>
</dbReference>
<dbReference type="InterPro" id="IPR018336">
    <property type="entry name" value="RNase_PH_CS"/>
</dbReference>
<dbReference type="NCBIfam" id="TIGR01966">
    <property type="entry name" value="RNasePH"/>
    <property type="match status" value="1"/>
</dbReference>
<dbReference type="PANTHER" id="PTHR11953">
    <property type="entry name" value="EXOSOME COMPLEX COMPONENT"/>
    <property type="match status" value="1"/>
</dbReference>
<dbReference type="PANTHER" id="PTHR11953:SF0">
    <property type="entry name" value="EXOSOME COMPLEX COMPONENT RRP41"/>
    <property type="match status" value="1"/>
</dbReference>
<dbReference type="Pfam" id="PF01138">
    <property type="entry name" value="RNase_PH"/>
    <property type="match status" value="1"/>
</dbReference>
<dbReference type="Pfam" id="PF03725">
    <property type="entry name" value="RNase_PH_C"/>
    <property type="match status" value="1"/>
</dbReference>
<dbReference type="SUPFAM" id="SSF55666">
    <property type="entry name" value="Ribonuclease PH domain 2-like"/>
    <property type="match status" value="1"/>
</dbReference>
<dbReference type="SUPFAM" id="SSF54211">
    <property type="entry name" value="Ribosomal protein S5 domain 2-like"/>
    <property type="match status" value="1"/>
</dbReference>
<dbReference type="PROSITE" id="PS01277">
    <property type="entry name" value="RIBONUCLEASE_PH"/>
    <property type="match status" value="1"/>
</dbReference>
<name>RNPH_BURPS</name>